<comment type="similarity">
    <text evidence="1">Belongs to the bacterial ribosomal protein bL33 family.</text>
</comment>
<keyword id="KW-1185">Reference proteome</keyword>
<keyword id="KW-0687">Ribonucleoprotein</keyword>
<keyword id="KW-0689">Ribosomal protein</keyword>
<dbReference type="EMBL" id="CP000416">
    <property type="protein sequence ID" value="ABJ64133.1"/>
    <property type="molecule type" value="Genomic_DNA"/>
</dbReference>
<dbReference type="SMR" id="Q03RN9"/>
<dbReference type="STRING" id="387344.LVIS_1000"/>
<dbReference type="KEGG" id="lbr:LVIS_1000"/>
<dbReference type="eggNOG" id="COG0267">
    <property type="taxonomic scope" value="Bacteria"/>
</dbReference>
<dbReference type="HOGENOM" id="CLU_190949_0_2_9"/>
<dbReference type="Proteomes" id="UP000001652">
    <property type="component" value="Chromosome"/>
</dbReference>
<dbReference type="GO" id="GO:0005737">
    <property type="term" value="C:cytoplasm"/>
    <property type="evidence" value="ECO:0007669"/>
    <property type="project" value="UniProtKB-ARBA"/>
</dbReference>
<dbReference type="GO" id="GO:1990904">
    <property type="term" value="C:ribonucleoprotein complex"/>
    <property type="evidence" value="ECO:0007669"/>
    <property type="project" value="UniProtKB-KW"/>
</dbReference>
<dbReference type="GO" id="GO:0005840">
    <property type="term" value="C:ribosome"/>
    <property type="evidence" value="ECO:0007669"/>
    <property type="project" value="UniProtKB-KW"/>
</dbReference>
<dbReference type="GO" id="GO:0003735">
    <property type="term" value="F:structural constituent of ribosome"/>
    <property type="evidence" value="ECO:0007669"/>
    <property type="project" value="InterPro"/>
</dbReference>
<dbReference type="GO" id="GO:0006412">
    <property type="term" value="P:translation"/>
    <property type="evidence" value="ECO:0007669"/>
    <property type="project" value="UniProtKB-UniRule"/>
</dbReference>
<dbReference type="Gene3D" id="2.20.28.120">
    <property type="entry name" value="Ribosomal protein L33"/>
    <property type="match status" value="1"/>
</dbReference>
<dbReference type="HAMAP" id="MF_00294">
    <property type="entry name" value="Ribosomal_bL33"/>
    <property type="match status" value="1"/>
</dbReference>
<dbReference type="InterPro" id="IPR001705">
    <property type="entry name" value="Ribosomal_bL33"/>
</dbReference>
<dbReference type="InterPro" id="IPR018264">
    <property type="entry name" value="Ribosomal_bL33_CS"/>
</dbReference>
<dbReference type="InterPro" id="IPR038584">
    <property type="entry name" value="Ribosomal_bL33_sf"/>
</dbReference>
<dbReference type="InterPro" id="IPR011332">
    <property type="entry name" value="Ribosomal_zn-bd"/>
</dbReference>
<dbReference type="NCBIfam" id="NF001764">
    <property type="entry name" value="PRK00504.1"/>
    <property type="match status" value="1"/>
</dbReference>
<dbReference type="NCBIfam" id="NF001860">
    <property type="entry name" value="PRK00595.1"/>
    <property type="match status" value="1"/>
</dbReference>
<dbReference type="NCBIfam" id="TIGR01023">
    <property type="entry name" value="rpmG_bact"/>
    <property type="match status" value="1"/>
</dbReference>
<dbReference type="PANTHER" id="PTHR43168">
    <property type="entry name" value="50S RIBOSOMAL PROTEIN L33, CHLOROPLASTIC"/>
    <property type="match status" value="1"/>
</dbReference>
<dbReference type="PANTHER" id="PTHR43168:SF2">
    <property type="entry name" value="LARGE RIBOSOMAL SUBUNIT PROTEIN BL33C"/>
    <property type="match status" value="1"/>
</dbReference>
<dbReference type="Pfam" id="PF00471">
    <property type="entry name" value="Ribosomal_L33"/>
    <property type="match status" value="1"/>
</dbReference>
<dbReference type="SUPFAM" id="SSF57829">
    <property type="entry name" value="Zn-binding ribosomal proteins"/>
    <property type="match status" value="1"/>
</dbReference>
<dbReference type="PROSITE" id="PS00582">
    <property type="entry name" value="RIBOSOMAL_L33"/>
    <property type="match status" value="1"/>
</dbReference>
<sequence>MRVHITLECTECHERNYLSSKNRRNNPDRVEFKKYCPRDRKVTLHRETK</sequence>
<name>RL332_LEVBA</name>
<evidence type="ECO:0000255" key="1">
    <source>
        <dbReference type="HAMAP-Rule" id="MF_00294"/>
    </source>
</evidence>
<reference key="1">
    <citation type="journal article" date="2006" name="Proc. Natl. Acad. Sci. U.S.A.">
        <title>Comparative genomics of the lactic acid bacteria.</title>
        <authorList>
            <person name="Makarova K.S."/>
            <person name="Slesarev A."/>
            <person name="Wolf Y.I."/>
            <person name="Sorokin A."/>
            <person name="Mirkin B."/>
            <person name="Koonin E.V."/>
            <person name="Pavlov A."/>
            <person name="Pavlova N."/>
            <person name="Karamychev V."/>
            <person name="Polouchine N."/>
            <person name="Shakhova V."/>
            <person name="Grigoriev I."/>
            <person name="Lou Y."/>
            <person name="Rohksar D."/>
            <person name="Lucas S."/>
            <person name="Huang K."/>
            <person name="Goodstein D.M."/>
            <person name="Hawkins T."/>
            <person name="Plengvidhya V."/>
            <person name="Welker D."/>
            <person name="Hughes J."/>
            <person name="Goh Y."/>
            <person name="Benson A."/>
            <person name="Baldwin K."/>
            <person name="Lee J.-H."/>
            <person name="Diaz-Muniz I."/>
            <person name="Dosti B."/>
            <person name="Smeianov V."/>
            <person name="Wechter W."/>
            <person name="Barabote R."/>
            <person name="Lorca G."/>
            <person name="Altermann E."/>
            <person name="Barrangou R."/>
            <person name="Ganesan B."/>
            <person name="Xie Y."/>
            <person name="Rawsthorne H."/>
            <person name="Tamir D."/>
            <person name="Parker C."/>
            <person name="Breidt F."/>
            <person name="Broadbent J.R."/>
            <person name="Hutkins R."/>
            <person name="O'Sullivan D."/>
            <person name="Steele J."/>
            <person name="Unlu G."/>
            <person name="Saier M.H. Jr."/>
            <person name="Klaenhammer T."/>
            <person name="Richardson P."/>
            <person name="Kozyavkin S."/>
            <person name="Weimer B.C."/>
            <person name="Mills D.A."/>
        </authorList>
    </citation>
    <scope>NUCLEOTIDE SEQUENCE [LARGE SCALE GENOMIC DNA]</scope>
    <source>
        <strain>ATCC 367 / BCRC 12310 / CIP 105137 / JCM 1170 / LMG 11437 / NCIMB 947 / NCTC 947</strain>
    </source>
</reference>
<accession>Q03RN9</accession>
<organism>
    <name type="scientific">Levilactobacillus brevis (strain ATCC 367 / BCRC 12310 / CIP 105137 / JCM 1170 / LMG 11437 / NCIMB 947 / NCTC 947)</name>
    <name type="common">Lactobacillus brevis</name>
    <dbReference type="NCBI Taxonomy" id="387344"/>
    <lineage>
        <taxon>Bacteria</taxon>
        <taxon>Bacillati</taxon>
        <taxon>Bacillota</taxon>
        <taxon>Bacilli</taxon>
        <taxon>Lactobacillales</taxon>
        <taxon>Lactobacillaceae</taxon>
        <taxon>Levilactobacillus</taxon>
    </lineage>
</organism>
<gene>
    <name evidence="1" type="primary">rpmG2</name>
    <name type="ordered locus">LVIS_1000</name>
</gene>
<proteinExistence type="inferred from homology"/>
<protein>
    <recommendedName>
        <fullName evidence="1">Large ribosomal subunit protein bL33B</fullName>
    </recommendedName>
    <alternativeName>
        <fullName evidence="1">50S ribosomal protein L33 2</fullName>
    </alternativeName>
</protein>
<feature type="chain" id="PRO_0000356492" description="Large ribosomal subunit protein bL33B">
    <location>
        <begin position="1"/>
        <end position="49"/>
    </location>
</feature>